<feature type="chain" id="PRO_1000003300" description="Ribosome-recycling factor">
    <location>
        <begin position="1"/>
        <end position="182"/>
    </location>
</feature>
<comment type="function">
    <text evidence="1">Responsible for the release of ribosomes from messenger RNA at the termination of protein biosynthesis. May increase the efficiency of translation by recycling ribosomes from one round of translation to another.</text>
</comment>
<comment type="subcellular location">
    <subcellularLocation>
        <location evidence="1">Cytoplasm</location>
    </subcellularLocation>
</comment>
<comment type="similarity">
    <text evidence="1">Belongs to the RRF family.</text>
</comment>
<dbReference type="EMBL" id="CP000110">
    <property type="protein sequence ID" value="ABB34484.1"/>
    <property type="molecule type" value="Genomic_DNA"/>
</dbReference>
<dbReference type="RefSeq" id="WP_011363712.1">
    <property type="nucleotide sequence ID" value="NC_007516.1"/>
</dbReference>
<dbReference type="SMR" id="Q3ALP8"/>
<dbReference type="STRING" id="110662.Syncc9605_0710"/>
<dbReference type="KEGG" id="syd:Syncc9605_0710"/>
<dbReference type="eggNOG" id="COG0233">
    <property type="taxonomic scope" value="Bacteria"/>
</dbReference>
<dbReference type="HOGENOM" id="CLU_073981_2_0_3"/>
<dbReference type="OrthoDB" id="9804006at2"/>
<dbReference type="GO" id="GO:0005737">
    <property type="term" value="C:cytoplasm"/>
    <property type="evidence" value="ECO:0007669"/>
    <property type="project" value="UniProtKB-SubCell"/>
</dbReference>
<dbReference type="GO" id="GO:0043023">
    <property type="term" value="F:ribosomal large subunit binding"/>
    <property type="evidence" value="ECO:0007669"/>
    <property type="project" value="TreeGrafter"/>
</dbReference>
<dbReference type="GO" id="GO:0006415">
    <property type="term" value="P:translational termination"/>
    <property type="evidence" value="ECO:0007669"/>
    <property type="project" value="UniProtKB-UniRule"/>
</dbReference>
<dbReference type="CDD" id="cd00520">
    <property type="entry name" value="RRF"/>
    <property type="match status" value="1"/>
</dbReference>
<dbReference type="FunFam" id="1.10.132.20:FF:000001">
    <property type="entry name" value="Ribosome-recycling factor"/>
    <property type="match status" value="1"/>
</dbReference>
<dbReference type="FunFam" id="3.30.1360.40:FF:000001">
    <property type="entry name" value="Ribosome-recycling factor"/>
    <property type="match status" value="1"/>
</dbReference>
<dbReference type="Gene3D" id="3.30.1360.40">
    <property type="match status" value="1"/>
</dbReference>
<dbReference type="Gene3D" id="1.10.132.20">
    <property type="entry name" value="Ribosome-recycling factor"/>
    <property type="match status" value="1"/>
</dbReference>
<dbReference type="HAMAP" id="MF_00040">
    <property type="entry name" value="RRF"/>
    <property type="match status" value="1"/>
</dbReference>
<dbReference type="InterPro" id="IPR002661">
    <property type="entry name" value="Ribosome_recyc_fac"/>
</dbReference>
<dbReference type="InterPro" id="IPR023584">
    <property type="entry name" value="Ribosome_recyc_fac_dom"/>
</dbReference>
<dbReference type="InterPro" id="IPR036191">
    <property type="entry name" value="RRF_sf"/>
</dbReference>
<dbReference type="NCBIfam" id="TIGR00496">
    <property type="entry name" value="frr"/>
    <property type="match status" value="1"/>
</dbReference>
<dbReference type="PANTHER" id="PTHR20982:SF3">
    <property type="entry name" value="MITOCHONDRIAL RIBOSOME RECYCLING FACTOR PSEUDO 1"/>
    <property type="match status" value="1"/>
</dbReference>
<dbReference type="PANTHER" id="PTHR20982">
    <property type="entry name" value="RIBOSOME RECYCLING FACTOR"/>
    <property type="match status" value="1"/>
</dbReference>
<dbReference type="Pfam" id="PF01765">
    <property type="entry name" value="RRF"/>
    <property type="match status" value="1"/>
</dbReference>
<dbReference type="SUPFAM" id="SSF55194">
    <property type="entry name" value="Ribosome recycling factor, RRF"/>
    <property type="match status" value="1"/>
</dbReference>
<proteinExistence type="inferred from homology"/>
<sequence>MSTQDLEASMRKSVEATQRNFNTIRTGRANSSLLDRISVEYYGAETPLKSLATLSTPDSQTIQIQPFDISALASIEKAIAMSELGFTPNNDGKIIRINVPPLTEERRKEFCKLASKYAEEGKVALRNLRRDAIDKIKKQEKEGEFSEDQSRDEQDGVQKTLDKFIAELEKHLASKEADILKV</sequence>
<name>RRF_SYNSC</name>
<protein>
    <recommendedName>
        <fullName evidence="1">Ribosome-recycling factor</fullName>
        <shortName evidence="1">RRF</shortName>
    </recommendedName>
    <alternativeName>
        <fullName evidence="1">Ribosome-releasing factor</fullName>
    </alternativeName>
</protein>
<organism>
    <name type="scientific">Synechococcus sp. (strain CC9605)</name>
    <dbReference type="NCBI Taxonomy" id="110662"/>
    <lineage>
        <taxon>Bacteria</taxon>
        <taxon>Bacillati</taxon>
        <taxon>Cyanobacteriota</taxon>
        <taxon>Cyanophyceae</taxon>
        <taxon>Synechococcales</taxon>
        <taxon>Synechococcaceae</taxon>
        <taxon>Synechococcus</taxon>
    </lineage>
</organism>
<reference key="1">
    <citation type="submission" date="2005-07" db="EMBL/GenBank/DDBJ databases">
        <title>Complete sequence of Synechococcus sp. CC9605.</title>
        <authorList>
            <consortium name="US DOE Joint Genome Institute"/>
            <person name="Copeland A."/>
            <person name="Lucas S."/>
            <person name="Lapidus A."/>
            <person name="Barry K."/>
            <person name="Detter J.C."/>
            <person name="Glavina T."/>
            <person name="Hammon N."/>
            <person name="Israni S."/>
            <person name="Pitluck S."/>
            <person name="Schmutz J."/>
            <person name="Martinez M."/>
            <person name="Larimer F."/>
            <person name="Land M."/>
            <person name="Kyrpides N."/>
            <person name="Ivanova N."/>
            <person name="Richardson P."/>
        </authorList>
    </citation>
    <scope>NUCLEOTIDE SEQUENCE [LARGE SCALE GENOMIC DNA]</scope>
    <source>
        <strain>CC9605</strain>
    </source>
</reference>
<accession>Q3ALP8</accession>
<keyword id="KW-0963">Cytoplasm</keyword>
<keyword id="KW-0648">Protein biosynthesis</keyword>
<evidence type="ECO:0000255" key="1">
    <source>
        <dbReference type="HAMAP-Rule" id="MF_00040"/>
    </source>
</evidence>
<gene>
    <name evidence="1" type="primary">frr</name>
    <name type="ordered locus">Syncc9605_0710</name>
</gene>